<gene>
    <name evidence="1" type="primary">ynfA</name>
    <name type="ordered locus">ECIAI1_1632</name>
</gene>
<organism>
    <name type="scientific">Escherichia coli O8 (strain IAI1)</name>
    <dbReference type="NCBI Taxonomy" id="585034"/>
    <lineage>
        <taxon>Bacteria</taxon>
        <taxon>Pseudomonadati</taxon>
        <taxon>Pseudomonadota</taxon>
        <taxon>Gammaproteobacteria</taxon>
        <taxon>Enterobacterales</taxon>
        <taxon>Enterobacteriaceae</taxon>
        <taxon>Escherichia</taxon>
    </lineage>
</organism>
<dbReference type="EMBL" id="CU928160">
    <property type="protein sequence ID" value="CAQ98489.1"/>
    <property type="molecule type" value="Genomic_DNA"/>
</dbReference>
<dbReference type="RefSeq" id="WP_000598292.1">
    <property type="nucleotide sequence ID" value="NC_011741.1"/>
</dbReference>
<dbReference type="SMR" id="B7LZX4"/>
<dbReference type="KEGG" id="ecr:ECIAI1_1632"/>
<dbReference type="HOGENOM" id="CLU_117653_2_1_6"/>
<dbReference type="GO" id="GO:0005886">
    <property type="term" value="C:plasma membrane"/>
    <property type="evidence" value="ECO:0007669"/>
    <property type="project" value="UniProtKB-SubCell"/>
</dbReference>
<dbReference type="HAMAP" id="MF_00010">
    <property type="entry name" value="UPF0060"/>
    <property type="match status" value="1"/>
</dbReference>
<dbReference type="InterPro" id="IPR003844">
    <property type="entry name" value="UPF0060"/>
</dbReference>
<dbReference type="NCBIfam" id="NF002586">
    <property type="entry name" value="PRK02237.1"/>
    <property type="match status" value="1"/>
</dbReference>
<dbReference type="PANTHER" id="PTHR36116">
    <property type="entry name" value="UPF0060 MEMBRANE PROTEIN YNFA"/>
    <property type="match status" value="1"/>
</dbReference>
<dbReference type="PANTHER" id="PTHR36116:SF1">
    <property type="entry name" value="UPF0060 MEMBRANE PROTEIN YNFA"/>
    <property type="match status" value="1"/>
</dbReference>
<dbReference type="Pfam" id="PF02694">
    <property type="entry name" value="UPF0060"/>
    <property type="match status" value="1"/>
</dbReference>
<dbReference type="SUPFAM" id="SSF103481">
    <property type="entry name" value="Multidrug resistance efflux transporter EmrE"/>
    <property type="match status" value="1"/>
</dbReference>
<proteinExistence type="inferred from homology"/>
<sequence>MIKTTLLFFATALCEIIGCFLPWLWLKRNASIWLLLPAGISLALFVWLLTLHPAASGRVYAAYGGVYVCTALMWLRVVDGVKLTLYDWTGALIALCGMLIIVAGWGRT</sequence>
<feature type="chain" id="PRO_1000197492" description="UPF0060 membrane protein YnfA">
    <location>
        <begin position="1"/>
        <end position="108"/>
    </location>
</feature>
<feature type="topological domain" description="Periplasmic" evidence="1">
    <location>
        <begin position="1"/>
        <end position="5"/>
    </location>
</feature>
<feature type="transmembrane region" description="Helical" evidence="1">
    <location>
        <begin position="6"/>
        <end position="26"/>
    </location>
</feature>
<feature type="topological domain" description="Cytoplasmic" evidence="1">
    <location>
        <begin position="27"/>
        <end position="30"/>
    </location>
</feature>
<feature type="transmembrane region" description="Helical" evidence="1">
    <location>
        <begin position="31"/>
        <end position="51"/>
    </location>
</feature>
<feature type="topological domain" description="Periplasmic" evidence="1">
    <location>
        <begin position="52"/>
        <end position="60"/>
    </location>
</feature>
<feature type="transmembrane region" description="Helical" evidence="1">
    <location>
        <begin position="61"/>
        <end position="81"/>
    </location>
</feature>
<feature type="topological domain" description="Cytoplasmic" evidence="1">
    <location>
        <begin position="82"/>
        <end position="84"/>
    </location>
</feature>
<feature type="transmembrane region" description="Helical" evidence="1">
    <location>
        <begin position="85"/>
        <end position="105"/>
    </location>
</feature>
<feature type="topological domain" description="Periplasmic" evidence="1">
    <location>
        <begin position="106"/>
        <end position="108"/>
    </location>
</feature>
<comment type="subcellular location">
    <subcellularLocation>
        <location evidence="1">Cell inner membrane</location>
        <topology evidence="1">Multi-pass membrane protein</topology>
    </subcellularLocation>
</comment>
<comment type="similarity">
    <text evidence="1">Belongs to the UPF0060 family.</text>
</comment>
<keyword id="KW-0997">Cell inner membrane</keyword>
<keyword id="KW-1003">Cell membrane</keyword>
<keyword id="KW-0472">Membrane</keyword>
<keyword id="KW-0812">Transmembrane</keyword>
<keyword id="KW-1133">Transmembrane helix</keyword>
<protein>
    <recommendedName>
        <fullName evidence="1">UPF0060 membrane protein YnfA</fullName>
    </recommendedName>
</protein>
<accession>B7LZX4</accession>
<evidence type="ECO:0000255" key="1">
    <source>
        <dbReference type="HAMAP-Rule" id="MF_00010"/>
    </source>
</evidence>
<name>YNFA_ECO8A</name>
<reference key="1">
    <citation type="journal article" date="2009" name="PLoS Genet.">
        <title>Organised genome dynamics in the Escherichia coli species results in highly diverse adaptive paths.</title>
        <authorList>
            <person name="Touchon M."/>
            <person name="Hoede C."/>
            <person name="Tenaillon O."/>
            <person name="Barbe V."/>
            <person name="Baeriswyl S."/>
            <person name="Bidet P."/>
            <person name="Bingen E."/>
            <person name="Bonacorsi S."/>
            <person name="Bouchier C."/>
            <person name="Bouvet O."/>
            <person name="Calteau A."/>
            <person name="Chiapello H."/>
            <person name="Clermont O."/>
            <person name="Cruveiller S."/>
            <person name="Danchin A."/>
            <person name="Diard M."/>
            <person name="Dossat C."/>
            <person name="Karoui M.E."/>
            <person name="Frapy E."/>
            <person name="Garry L."/>
            <person name="Ghigo J.M."/>
            <person name="Gilles A.M."/>
            <person name="Johnson J."/>
            <person name="Le Bouguenec C."/>
            <person name="Lescat M."/>
            <person name="Mangenot S."/>
            <person name="Martinez-Jehanne V."/>
            <person name="Matic I."/>
            <person name="Nassif X."/>
            <person name="Oztas S."/>
            <person name="Petit M.A."/>
            <person name="Pichon C."/>
            <person name="Rouy Z."/>
            <person name="Ruf C.S."/>
            <person name="Schneider D."/>
            <person name="Tourret J."/>
            <person name="Vacherie B."/>
            <person name="Vallenet D."/>
            <person name="Medigue C."/>
            <person name="Rocha E.P.C."/>
            <person name="Denamur E."/>
        </authorList>
    </citation>
    <scope>NUCLEOTIDE SEQUENCE [LARGE SCALE GENOMIC DNA]</scope>
    <source>
        <strain>IAI1</strain>
    </source>
</reference>